<reference key="1">
    <citation type="journal article" date="2007" name="Proc. Natl. Acad. Sci. U.S.A.">
        <title>Independent sorting-out of thousands of duplicated gene pairs in two yeast species descended from a whole-genome duplication.</title>
        <authorList>
            <person name="Scannell D.R."/>
            <person name="Frank A.C."/>
            <person name="Conant G.C."/>
            <person name="Byrne K.P."/>
            <person name="Woolfit M."/>
            <person name="Wolfe K.H."/>
        </authorList>
    </citation>
    <scope>NUCLEOTIDE SEQUENCE [LARGE SCALE GENOMIC DNA]</scope>
    <source>
        <strain>ATCC 22028 / DSM 70294 / BCRC 21397 / CBS 2163 / NBRC 10782 / NRRL Y-8283 / UCD 57-17</strain>
    </source>
</reference>
<accession>A7TN35</accession>
<protein>
    <recommendedName>
        <fullName>Altered inheritance of mitochondria protein 41, mitochondrial</fullName>
    </recommendedName>
</protein>
<dbReference type="EMBL" id="DS480427">
    <property type="protein sequence ID" value="EDO16341.1"/>
    <property type="molecule type" value="Genomic_DNA"/>
</dbReference>
<dbReference type="RefSeq" id="XP_001644199.1">
    <property type="nucleotide sequence ID" value="XM_001644149.1"/>
</dbReference>
<dbReference type="SMR" id="A7TN35"/>
<dbReference type="FunCoup" id="A7TN35">
    <property type="interactions" value="122"/>
</dbReference>
<dbReference type="STRING" id="436907.A7TN35"/>
<dbReference type="GeneID" id="5544464"/>
<dbReference type="KEGG" id="vpo:Kpol_1059p31"/>
<dbReference type="eggNOG" id="ENOG502RZX9">
    <property type="taxonomic scope" value="Eukaryota"/>
</dbReference>
<dbReference type="HOGENOM" id="CLU_123460_0_0_1"/>
<dbReference type="InParanoid" id="A7TN35"/>
<dbReference type="OMA" id="CIRTINS"/>
<dbReference type="OrthoDB" id="538640at2759"/>
<dbReference type="PhylomeDB" id="A7TN35"/>
<dbReference type="Proteomes" id="UP000000267">
    <property type="component" value="Unassembled WGS sequence"/>
</dbReference>
<dbReference type="GO" id="GO:0005739">
    <property type="term" value="C:mitochondrion"/>
    <property type="evidence" value="ECO:0007669"/>
    <property type="project" value="UniProtKB-SubCell"/>
</dbReference>
<dbReference type="GO" id="GO:0016884">
    <property type="term" value="F:carbon-nitrogen ligase activity, with glutamine as amido-N-donor"/>
    <property type="evidence" value="ECO:0007669"/>
    <property type="project" value="InterPro"/>
</dbReference>
<dbReference type="Gene3D" id="1.10.1510.10">
    <property type="entry name" value="Uncharacterised protein YqeY/AIM41 PF09424, N-terminal domain"/>
    <property type="match status" value="1"/>
</dbReference>
<dbReference type="InterPro" id="IPR003789">
    <property type="entry name" value="Asn/Gln_tRNA_amidoTrase-B-like"/>
</dbReference>
<dbReference type="InterPro" id="IPR019004">
    <property type="entry name" value="YqeY/Aim41"/>
</dbReference>
<dbReference type="InterPro" id="IPR042184">
    <property type="entry name" value="YqeY/Aim41_N"/>
</dbReference>
<dbReference type="PANTHER" id="PTHR28055">
    <property type="entry name" value="ALTERED INHERITANCE OF MITOCHONDRIA PROTEIN 41, MITOCHONDRIAL"/>
    <property type="match status" value="1"/>
</dbReference>
<dbReference type="PANTHER" id="PTHR28055:SF1">
    <property type="entry name" value="ALTERED INHERITANCE OF MITOCHONDRIA PROTEIN 41, MITOCHONDRIAL"/>
    <property type="match status" value="1"/>
</dbReference>
<dbReference type="Pfam" id="PF09424">
    <property type="entry name" value="YqeY"/>
    <property type="match status" value="1"/>
</dbReference>
<dbReference type="SUPFAM" id="SSF89095">
    <property type="entry name" value="GatB/YqeY motif"/>
    <property type="match status" value="1"/>
</dbReference>
<organism>
    <name type="scientific">Vanderwaltozyma polyspora (strain ATCC 22028 / DSM 70294 / BCRC 21397 / CBS 2163 / NBRC 10782 / NRRL Y-8283 / UCD 57-17)</name>
    <name type="common">Kluyveromyces polysporus</name>
    <dbReference type="NCBI Taxonomy" id="436907"/>
    <lineage>
        <taxon>Eukaryota</taxon>
        <taxon>Fungi</taxon>
        <taxon>Dikarya</taxon>
        <taxon>Ascomycota</taxon>
        <taxon>Saccharomycotina</taxon>
        <taxon>Saccharomycetes</taxon>
        <taxon>Saccharomycetales</taxon>
        <taxon>Saccharomycetaceae</taxon>
        <taxon>Vanderwaltozyma</taxon>
    </lineage>
</organism>
<feature type="transit peptide" description="Mitochondrion" evidence="2">
    <location>
        <begin position="1"/>
        <end position="22"/>
    </location>
</feature>
<feature type="chain" id="PRO_0000399870" description="Altered inheritance of mitochondria protein 41, mitochondrial">
    <location>
        <begin position="23"/>
        <end position="185"/>
    </location>
</feature>
<proteinExistence type="inferred from homology"/>
<name>AIM41_VANPO</name>
<comment type="subcellular location">
    <subcellularLocation>
        <location evidence="1">Mitochondrion</location>
    </subcellularLocation>
</comment>
<comment type="similarity">
    <text evidence="3">Belongs to the AIM41 family.</text>
</comment>
<evidence type="ECO:0000250" key="1"/>
<evidence type="ECO:0000255" key="2"/>
<evidence type="ECO:0000305" key="3"/>
<gene>
    <name type="primary">AIM41</name>
    <name type="ORF">Kpol_1059p31</name>
</gene>
<sequence>MNFMLRRNGGQFQKFGFFIRCNSTESFYSKAILGLKKDLKQAMLAKDDLKKTTIRNMLSTIKNKEIDAKDTKFDEFTLFGIYSKLINQRKDSISDYLKNNREDLAGKEEQELKLIQTYLDSLPIASPQEIDTKVEKFLNDLKEKEGTVPMKDVFSKVDWNTLTKEWKASQSMIKSSIVSKYKNIF</sequence>
<keyword id="KW-0496">Mitochondrion</keyword>
<keyword id="KW-1185">Reference proteome</keyword>
<keyword id="KW-0809">Transit peptide</keyword>